<accession>A7GN70</accession>
<name>DAPB_BACCN</name>
<feature type="chain" id="PRO_1000075670" description="4-hydroxy-tetrahydrodipicolinate reductase">
    <location>
        <begin position="1"/>
        <end position="266"/>
    </location>
</feature>
<feature type="active site" description="Proton donor/acceptor" evidence="1">
    <location>
        <position position="155"/>
    </location>
</feature>
<feature type="active site" description="Proton donor" evidence="1">
    <location>
        <position position="159"/>
    </location>
</feature>
<feature type="binding site" evidence="1">
    <location>
        <begin position="10"/>
        <end position="15"/>
    </location>
    <ligand>
        <name>NAD(+)</name>
        <dbReference type="ChEBI" id="CHEBI:57540"/>
    </ligand>
</feature>
<feature type="binding site" evidence="1">
    <location>
        <position position="38"/>
    </location>
    <ligand>
        <name>NADP(+)</name>
        <dbReference type="ChEBI" id="CHEBI:58349"/>
    </ligand>
</feature>
<feature type="binding site" evidence="1">
    <location>
        <begin position="99"/>
        <end position="101"/>
    </location>
    <ligand>
        <name>NAD(+)</name>
        <dbReference type="ChEBI" id="CHEBI:57540"/>
    </ligand>
</feature>
<feature type="binding site" evidence="1">
    <location>
        <begin position="125"/>
        <end position="128"/>
    </location>
    <ligand>
        <name>NAD(+)</name>
        <dbReference type="ChEBI" id="CHEBI:57540"/>
    </ligand>
</feature>
<feature type="binding site" evidence="1">
    <location>
        <position position="156"/>
    </location>
    <ligand>
        <name>(S)-2,3,4,5-tetrahydrodipicolinate</name>
        <dbReference type="ChEBI" id="CHEBI:16845"/>
    </ligand>
</feature>
<feature type="binding site" evidence="1">
    <location>
        <begin position="165"/>
        <end position="166"/>
    </location>
    <ligand>
        <name>(S)-2,3,4,5-tetrahydrodipicolinate</name>
        <dbReference type="ChEBI" id="CHEBI:16845"/>
    </ligand>
</feature>
<protein>
    <recommendedName>
        <fullName evidence="1">4-hydroxy-tetrahydrodipicolinate reductase</fullName>
        <shortName evidence="1">HTPA reductase</shortName>
        <ecNumber evidence="1">1.17.1.8</ecNumber>
    </recommendedName>
</protein>
<organism>
    <name type="scientific">Bacillus cytotoxicus (strain DSM 22905 / CIP 110041 / 391-98 / NVH 391-98)</name>
    <dbReference type="NCBI Taxonomy" id="315749"/>
    <lineage>
        <taxon>Bacteria</taxon>
        <taxon>Bacillati</taxon>
        <taxon>Bacillota</taxon>
        <taxon>Bacilli</taxon>
        <taxon>Bacillales</taxon>
        <taxon>Bacillaceae</taxon>
        <taxon>Bacillus</taxon>
        <taxon>Bacillus cereus group</taxon>
    </lineage>
</organism>
<dbReference type="EC" id="1.17.1.8" evidence="1"/>
<dbReference type="EMBL" id="CP000764">
    <property type="protein sequence ID" value="ABS21578.1"/>
    <property type="molecule type" value="Genomic_DNA"/>
</dbReference>
<dbReference type="RefSeq" id="WP_012093745.1">
    <property type="nucleotide sequence ID" value="NC_009674.1"/>
</dbReference>
<dbReference type="SMR" id="A7GN70"/>
<dbReference type="STRING" id="315749.Bcer98_1256"/>
<dbReference type="GeneID" id="33896605"/>
<dbReference type="KEGG" id="bcy:Bcer98_1256"/>
<dbReference type="eggNOG" id="COG0289">
    <property type="taxonomic scope" value="Bacteria"/>
</dbReference>
<dbReference type="HOGENOM" id="CLU_047479_0_1_9"/>
<dbReference type="OrthoDB" id="9790352at2"/>
<dbReference type="UniPathway" id="UPA00034">
    <property type="reaction ID" value="UER00018"/>
</dbReference>
<dbReference type="Proteomes" id="UP000002300">
    <property type="component" value="Chromosome"/>
</dbReference>
<dbReference type="GO" id="GO:0005829">
    <property type="term" value="C:cytosol"/>
    <property type="evidence" value="ECO:0007669"/>
    <property type="project" value="TreeGrafter"/>
</dbReference>
<dbReference type="GO" id="GO:0008839">
    <property type="term" value="F:4-hydroxy-tetrahydrodipicolinate reductase"/>
    <property type="evidence" value="ECO:0007669"/>
    <property type="project" value="UniProtKB-EC"/>
</dbReference>
<dbReference type="GO" id="GO:0051287">
    <property type="term" value="F:NAD binding"/>
    <property type="evidence" value="ECO:0007669"/>
    <property type="project" value="UniProtKB-UniRule"/>
</dbReference>
<dbReference type="GO" id="GO:0050661">
    <property type="term" value="F:NADP binding"/>
    <property type="evidence" value="ECO:0007669"/>
    <property type="project" value="UniProtKB-UniRule"/>
</dbReference>
<dbReference type="GO" id="GO:0016726">
    <property type="term" value="F:oxidoreductase activity, acting on CH or CH2 groups, NAD or NADP as acceptor"/>
    <property type="evidence" value="ECO:0007669"/>
    <property type="project" value="UniProtKB-UniRule"/>
</dbReference>
<dbReference type="GO" id="GO:0019877">
    <property type="term" value="P:diaminopimelate biosynthetic process"/>
    <property type="evidence" value="ECO:0007669"/>
    <property type="project" value="UniProtKB-UniRule"/>
</dbReference>
<dbReference type="GO" id="GO:0009089">
    <property type="term" value="P:lysine biosynthetic process via diaminopimelate"/>
    <property type="evidence" value="ECO:0007669"/>
    <property type="project" value="UniProtKB-UniRule"/>
</dbReference>
<dbReference type="CDD" id="cd02274">
    <property type="entry name" value="DHDPR_N"/>
    <property type="match status" value="1"/>
</dbReference>
<dbReference type="FunFam" id="3.30.360.10:FF:000009">
    <property type="entry name" value="4-hydroxy-tetrahydrodipicolinate reductase"/>
    <property type="match status" value="1"/>
</dbReference>
<dbReference type="FunFam" id="3.40.50.720:FF:000180">
    <property type="entry name" value="4-hydroxy-tetrahydrodipicolinate reductase"/>
    <property type="match status" value="1"/>
</dbReference>
<dbReference type="Gene3D" id="3.30.360.10">
    <property type="entry name" value="Dihydrodipicolinate Reductase, domain 2"/>
    <property type="match status" value="1"/>
</dbReference>
<dbReference type="Gene3D" id="3.40.50.720">
    <property type="entry name" value="NAD(P)-binding Rossmann-like Domain"/>
    <property type="match status" value="1"/>
</dbReference>
<dbReference type="HAMAP" id="MF_00102">
    <property type="entry name" value="DapB"/>
    <property type="match status" value="1"/>
</dbReference>
<dbReference type="InterPro" id="IPR022663">
    <property type="entry name" value="DapB_C"/>
</dbReference>
<dbReference type="InterPro" id="IPR000846">
    <property type="entry name" value="DapB_N"/>
</dbReference>
<dbReference type="InterPro" id="IPR022664">
    <property type="entry name" value="DapB_N_CS"/>
</dbReference>
<dbReference type="InterPro" id="IPR023940">
    <property type="entry name" value="DHDPR_bac"/>
</dbReference>
<dbReference type="InterPro" id="IPR036291">
    <property type="entry name" value="NAD(P)-bd_dom_sf"/>
</dbReference>
<dbReference type="NCBIfam" id="TIGR00036">
    <property type="entry name" value="dapB"/>
    <property type="match status" value="1"/>
</dbReference>
<dbReference type="PANTHER" id="PTHR20836:SF0">
    <property type="entry name" value="4-HYDROXY-TETRAHYDRODIPICOLINATE REDUCTASE 1, CHLOROPLASTIC-RELATED"/>
    <property type="match status" value="1"/>
</dbReference>
<dbReference type="PANTHER" id="PTHR20836">
    <property type="entry name" value="DIHYDRODIPICOLINATE REDUCTASE"/>
    <property type="match status" value="1"/>
</dbReference>
<dbReference type="Pfam" id="PF05173">
    <property type="entry name" value="DapB_C"/>
    <property type="match status" value="1"/>
</dbReference>
<dbReference type="Pfam" id="PF01113">
    <property type="entry name" value="DapB_N"/>
    <property type="match status" value="1"/>
</dbReference>
<dbReference type="PIRSF" id="PIRSF000161">
    <property type="entry name" value="DHPR"/>
    <property type="match status" value="1"/>
</dbReference>
<dbReference type="SUPFAM" id="SSF55347">
    <property type="entry name" value="Glyceraldehyde-3-phosphate dehydrogenase-like, C-terminal domain"/>
    <property type="match status" value="1"/>
</dbReference>
<dbReference type="SUPFAM" id="SSF51735">
    <property type="entry name" value="NAD(P)-binding Rossmann-fold domains"/>
    <property type="match status" value="1"/>
</dbReference>
<dbReference type="PROSITE" id="PS01298">
    <property type="entry name" value="DAPB"/>
    <property type="match status" value="1"/>
</dbReference>
<keyword id="KW-0028">Amino-acid biosynthesis</keyword>
<keyword id="KW-0963">Cytoplasm</keyword>
<keyword id="KW-0220">Diaminopimelate biosynthesis</keyword>
<keyword id="KW-0457">Lysine biosynthesis</keyword>
<keyword id="KW-0520">NAD</keyword>
<keyword id="KW-0521">NADP</keyword>
<keyword id="KW-0560">Oxidoreductase</keyword>
<reference key="1">
    <citation type="journal article" date="2008" name="Chem. Biol. Interact.">
        <title>Extending the Bacillus cereus group genomics to putative food-borne pathogens of different toxicity.</title>
        <authorList>
            <person name="Lapidus A."/>
            <person name="Goltsman E."/>
            <person name="Auger S."/>
            <person name="Galleron N."/>
            <person name="Segurens B."/>
            <person name="Dossat C."/>
            <person name="Land M.L."/>
            <person name="Broussolle V."/>
            <person name="Brillard J."/>
            <person name="Guinebretiere M.-H."/>
            <person name="Sanchis V."/>
            <person name="Nguen-the C."/>
            <person name="Lereclus D."/>
            <person name="Richardson P."/>
            <person name="Wincker P."/>
            <person name="Weissenbach J."/>
            <person name="Ehrlich S.D."/>
            <person name="Sorokin A."/>
        </authorList>
    </citation>
    <scope>NUCLEOTIDE SEQUENCE [LARGE SCALE GENOMIC DNA]</scope>
    <source>
        <strain>DSM 22905 / CIP 110041 / 391-98 / NVH 391-98</strain>
    </source>
</reference>
<gene>
    <name evidence="1" type="primary">dapB</name>
    <name type="ordered locus">Bcer98_1256</name>
</gene>
<evidence type="ECO:0000255" key="1">
    <source>
        <dbReference type="HAMAP-Rule" id="MF_00102"/>
    </source>
</evidence>
<evidence type="ECO:0000305" key="2"/>
<comment type="function">
    <text evidence="1">Catalyzes the conversion of 4-hydroxy-tetrahydrodipicolinate (HTPA) to tetrahydrodipicolinate.</text>
</comment>
<comment type="catalytic activity">
    <reaction evidence="1">
        <text>(S)-2,3,4,5-tetrahydrodipicolinate + NAD(+) + H2O = (2S,4S)-4-hydroxy-2,3,4,5-tetrahydrodipicolinate + NADH + H(+)</text>
        <dbReference type="Rhea" id="RHEA:35323"/>
        <dbReference type="ChEBI" id="CHEBI:15377"/>
        <dbReference type="ChEBI" id="CHEBI:15378"/>
        <dbReference type="ChEBI" id="CHEBI:16845"/>
        <dbReference type="ChEBI" id="CHEBI:57540"/>
        <dbReference type="ChEBI" id="CHEBI:57945"/>
        <dbReference type="ChEBI" id="CHEBI:67139"/>
        <dbReference type="EC" id="1.17.1.8"/>
    </reaction>
</comment>
<comment type="catalytic activity">
    <reaction evidence="1">
        <text>(S)-2,3,4,5-tetrahydrodipicolinate + NADP(+) + H2O = (2S,4S)-4-hydroxy-2,3,4,5-tetrahydrodipicolinate + NADPH + H(+)</text>
        <dbReference type="Rhea" id="RHEA:35331"/>
        <dbReference type="ChEBI" id="CHEBI:15377"/>
        <dbReference type="ChEBI" id="CHEBI:15378"/>
        <dbReference type="ChEBI" id="CHEBI:16845"/>
        <dbReference type="ChEBI" id="CHEBI:57783"/>
        <dbReference type="ChEBI" id="CHEBI:58349"/>
        <dbReference type="ChEBI" id="CHEBI:67139"/>
        <dbReference type="EC" id="1.17.1.8"/>
    </reaction>
</comment>
<comment type="pathway">
    <text evidence="1">Amino-acid biosynthesis; L-lysine biosynthesis via DAP pathway; (S)-tetrahydrodipicolinate from L-aspartate: step 4/4.</text>
</comment>
<comment type="subcellular location">
    <subcellularLocation>
        <location evidence="1">Cytoplasm</location>
    </subcellularLocation>
</comment>
<comment type="similarity">
    <text evidence="1">Belongs to the DapB family.</text>
</comment>
<comment type="caution">
    <text evidence="2">Was originally thought to be a dihydrodipicolinate reductase (DHDPR), catalyzing the conversion of dihydrodipicolinate to tetrahydrodipicolinate. However, it was shown in E.coli that the substrate of the enzymatic reaction is not dihydrodipicolinate (DHDP) but in fact (2S,4S)-4-hydroxy-2,3,4,5-tetrahydrodipicolinic acid (HTPA), the product released by the DapA-catalyzed reaction.</text>
</comment>
<sequence>MKDIKVIIAGPRGRMGHEAVLLMERTPHFQFVAAVDYKHGGEKISDLPGMPALDVPIYEDLHTCLDEIEADVLLDLTTPEVGKKHVTLAVEHGLRSVIGTTGFTEEELQHLTNIAKEKEVGTIIAPNFAIGAVLMMKFSQMAAKYFQDVEIIELHHDQKLDAPSGTAVKTVDLIRQHREPKQQGHPNETEQLKGVRGANVDGIHIHSVRLPGLIAHQEVLFGGDGQMLTVRHDSFNRASFMSGVKLSIETVMNLDHLVYGLENIMD</sequence>
<proteinExistence type="inferred from homology"/>